<comment type="function">
    <text>Part of a Salmonella virulence gene cluster.</text>
</comment>
<comment type="disruption phenotype">
    <text evidence="1">No effect on virulence in mice.</text>
</comment>
<comment type="miscellaneous">
    <text>In Salmonella spp. the spv gene cluster is encoded on a highly transmissible plasmid.</text>
</comment>
<comment type="similarity">
    <text evidence="2">Belongs to the SpvA family.</text>
</comment>
<dbReference type="EMBL" id="X56727">
    <property type="protein sequence ID" value="CAA40048.1"/>
    <property type="molecule type" value="Genomic_DNA"/>
</dbReference>
<dbReference type="RefSeq" id="WP_001575487.1">
    <property type="nucleotide sequence ID" value="NZ_VDCP01000013.1"/>
</dbReference>
<dbReference type="RefSeq" id="YP_001716112.1">
    <property type="nucleotide sequence ID" value="NC_010422.1"/>
</dbReference>
<dbReference type="RefSeq" id="YP_006954903.1">
    <property type="nucleotide sequence ID" value="NC_019106.1"/>
</dbReference>
<dbReference type="OMA" id="RCLFREN"/>
<dbReference type="InterPro" id="IPR018003">
    <property type="entry name" value="Insecticidal_toxin/plasmid_vir"/>
</dbReference>
<dbReference type="InterPro" id="IPR003518">
    <property type="entry name" value="Sal_SpvA"/>
</dbReference>
<dbReference type="NCBIfam" id="NF011759">
    <property type="entry name" value="PRK15212.1"/>
    <property type="match status" value="1"/>
</dbReference>
<dbReference type="Pfam" id="PF03538">
    <property type="entry name" value="VRP1"/>
    <property type="match status" value="2"/>
</dbReference>
<dbReference type="PRINTS" id="PR01340">
    <property type="entry name" value="SALSPVAPROT"/>
</dbReference>
<accession>P24418</accession>
<feature type="chain" id="PRO_0000221660" description="Virulence protein SpvA">
    <location>
        <begin position="1"/>
        <end position="255"/>
    </location>
</feature>
<proteinExistence type="inferred from homology"/>
<reference key="1">
    <citation type="journal article" date="1991" name="Mol. Microbiol.">
        <title>Molecular analysis of the virulence locus of the Salmonella dublin plasmid pSDL2.</title>
        <authorList>
            <person name="Krause M."/>
            <person name="Roudier C."/>
            <person name="Fierer J."/>
            <person name="Harwood J."/>
            <person name="Guiney D."/>
        </authorList>
    </citation>
    <scope>NUCLEOTIDE SEQUENCE [GENOMIC DNA]</scope>
    <source>
        <strain>Lane</strain>
    </source>
</reference>
<reference key="2">
    <citation type="journal article" date="1992" name="J. Bacteriol.">
        <title>Characterization of translation termination mutations in the spv operon of the Salmonella virulence plasmid pSDL2.</title>
        <authorList>
            <person name="Roudier C."/>
            <person name="Fierer J."/>
            <person name="Guiney D.G."/>
        </authorList>
    </citation>
    <scope>DISRUPTION PHENOTYPE UPON MOUSE INFECTION</scope>
    <source>
        <strain>Lane</strain>
    </source>
</reference>
<keyword id="KW-0614">Plasmid</keyword>
<keyword id="KW-0843">Virulence</keyword>
<geneLocation type="plasmid">
    <name>pSDL2</name>
</geneLocation>
<evidence type="ECO:0000269" key="1">
    <source>
    </source>
</evidence>
<evidence type="ECO:0000305" key="2"/>
<protein>
    <recommendedName>
        <fullName>Virulence protein SpvA</fullName>
    </recommendedName>
    <alternativeName>
        <fullName>28.1 kDa virulence protein</fullName>
    </alternativeName>
</protein>
<name>SPVA_SALDU</name>
<gene>
    <name type="primary">spvA</name>
    <name type="synonym">vsdB</name>
</gene>
<organism>
    <name type="scientific">Salmonella dublin</name>
    <dbReference type="NCBI Taxonomy" id="98360"/>
    <lineage>
        <taxon>Bacteria</taxon>
        <taxon>Pseudomonadati</taxon>
        <taxon>Pseudomonadota</taxon>
        <taxon>Gammaproteobacteria</taxon>
        <taxon>Enterobacterales</taxon>
        <taxon>Enterobacteriaceae</taxon>
        <taxon>Salmonella</taxon>
    </lineage>
</organism>
<sequence length="255" mass="28156">MNMNQTTSPALSQVETAIRAPAGNFAKYNYYSVFDIVRQTRKQFINANMSWPGSRGGKAWDLAMGQAQYIRCMFRENQLTRRVRGTLQQTPDNGTNLSSSAVGGIQGQAERRPDLATLMVVNDAINQQIPTLLPYHFPHDQVELSLLNTDVSLEDIISESSIDWPWFLSNSLTGDNSNYAMELASRLSPEQQTLPTEPDNSTATDLTSFYQTNLGLKTADYTPFEALNTFARQLAITVPPGGTVDCGYSACQPAV</sequence>